<keyword id="KW-0028">Amino-acid biosynthesis</keyword>
<keyword id="KW-0963">Cytoplasm</keyword>
<keyword id="KW-0368">Histidine biosynthesis</keyword>
<keyword id="KW-0413">Isomerase</keyword>
<keyword id="KW-1185">Reference proteome</keyword>
<gene>
    <name evidence="1" type="primary">hisA</name>
    <name type="ordered locus">cce_4140</name>
</gene>
<evidence type="ECO:0000255" key="1">
    <source>
        <dbReference type="HAMAP-Rule" id="MF_01014"/>
    </source>
</evidence>
<accession>B1WRP7</accession>
<name>HIS4_CROS5</name>
<comment type="catalytic activity">
    <reaction evidence="1">
        <text>1-(5-phospho-beta-D-ribosyl)-5-[(5-phospho-beta-D-ribosylamino)methylideneamino]imidazole-4-carboxamide = 5-[(5-phospho-1-deoxy-D-ribulos-1-ylimino)methylamino]-1-(5-phospho-beta-D-ribosyl)imidazole-4-carboxamide</text>
        <dbReference type="Rhea" id="RHEA:15469"/>
        <dbReference type="ChEBI" id="CHEBI:58435"/>
        <dbReference type="ChEBI" id="CHEBI:58525"/>
        <dbReference type="EC" id="5.3.1.16"/>
    </reaction>
</comment>
<comment type="pathway">
    <text evidence="1">Amino-acid biosynthesis; L-histidine biosynthesis; L-histidine from 5-phospho-alpha-D-ribose 1-diphosphate: step 4/9.</text>
</comment>
<comment type="subcellular location">
    <subcellularLocation>
        <location evidence="1">Cytoplasm</location>
    </subcellularLocation>
</comment>
<comment type="similarity">
    <text evidence="1">Belongs to the HisA/HisF family.</text>
</comment>
<organism>
    <name type="scientific">Crocosphaera subtropica (strain ATCC 51142 / BH68)</name>
    <name type="common">Cyanothece sp. (strain ATCC 51142)</name>
    <dbReference type="NCBI Taxonomy" id="43989"/>
    <lineage>
        <taxon>Bacteria</taxon>
        <taxon>Bacillati</taxon>
        <taxon>Cyanobacteriota</taxon>
        <taxon>Cyanophyceae</taxon>
        <taxon>Oscillatoriophycideae</taxon>
        <taxon>Chroococcales</taxon>
        <taxon>Aphanothecaceae</taxon>
        <taxon>Crocosphaera</taxon>
        <taxon>Crocosphaera subtropica</taxon>
    </lineage>
</organism>
<feature type="chain" id="PRO_1000148965" description="1-(5-phosphoribosyl)-5-[(5-phosphoribosylamino)methylideneamino] imidazole-4-carboxamide isomerase">
    <location>
        <begin position="1"/>
        <end position="257"/>
    </location>
</feature>
<feature type="active site" description="Proton acceptor" evidence="1">
    <location>
        <position position="8"/>
    </location>
</feature>
<feature type="active site" description="Proton donor" evidence="1">
    <location>
        <position position="129"/>
    </location>
</feature>
<dbReference type="EC" id="5.3.1.16" evidence="1"/>
<dbReference type="EMBL" id="CP000806">
    <property type="protein sequence ID" value="ACB53488.1"/>
    <property type="molecule type" value="Genomic_DNA"/>
</dbReference>
<dbReference type="RefSeq" id="WP_009543780.1">
    <property type="nucleotide sequence ID" value="NC_010546.1"/>
</dbReference>
<dbReference type="SMR" id="B1WRP7"/>
<dbReference type="STRING" id="43989.cce_4140"/>
<dbReference type="KEGG" id="cyt:cce_4140"/>
<dbReference type="eggNOG" id="COG0106">
    <property type="taxonomic scope" value="Bacteria"/>
</dbReference>
<dbReference type="HOGENOM" id="CLU_048577_1_1_3"/>
<dbReference type="OrthoDB" id="9807749at2"/>
<dbReference type="UniPathway" id="UPA00031">
    <property type="reaction ID" value="UER00009"/>
</dbReference>
<dbReference type="Proteomes" id="UP000001203">
    <property type="component" value="Chromosome circular"/>
</dbReference>
<dbReference type="GO" id="GO:0005737">
    <property type="term" value="C:cytoplasm"/>
    <property type="evidence" value="ECO:0007669"/>
    <property type="project" value="UniProtKB-SubCell"/>
</dbReference>
<dbReference type="GO" id="GO:0003949">
    <property type="term" value="F:1-(5-phosphoribosyl)-5-[(5-phosphoribosylamino)methylideneamino]imidazole-4-carboxamide isomerase activity"/>
    <property type="evidence" value="ECO:0007669"/>
    <property type="project" value="UniProtKB-UniRule"/>
</dbReference>
<dbReference type="GO" id="GO:0000105">
    <property type="term" value="P:L-histidine biosynthetic process"/>
    <property type="evidence" value="ECO:0007669"/>
    <property type="project" value="UniProtKB-UniRule"/>
</dbReference>
<dbReference type="GO" id="GO:0000162">
    <property type="term" value="P:L-tryptophan biosynthetic process"/>
    <property type="evidence" value="ECO:0007669"/>
    <property type="project" value="TreeGrafter"/>
</dbReference>
<dbReference type="CDD" id="cd04732">
    <property type="entry name" value="HisA"/>
    <property type="match status" value="1"/>
</dbReference>
<dbReference type="FunFam" id="3.20.20.70:FF:000009">
    <property type="entry name" value="1-(5-phosphoribosyl)-5-[(5-phosphoribosylamino)methylideneamino] imidazole-4-carboxamide isomerase"/>
    <property type="match status" value="1"/>
</dbReference>
<dbReference type="Gene3D" id="3.20.20.70">
    <property type="entry name" value="Aldolase class I"/>
    <property type="match status" value="1"/>
</dbReference>
<dbReference type="HAMAP" id="MF_01014">
    <property type="entry name" value="HisA"/>
    <property type="match status" value="1"/>
</dbReference>
<dbReference type="InterPro" id="IPR013785">
    <property type="entry name" value="Aldolase_TIM"/>
</dbReference>
<dbReference type="InterPro" id="IPR006062">
    <property type="entry name" value="His_biosynth"/>
</dbReference>
<dbReference type="InterPro" id="IPR006063">
    <property type="entry name" value="HisA_bact_arch"/>
</dbReference>
<dbReference type="InterPro" id="IPR044524">
    <property type="entry name" value="Isoase_HisA-like"/>
</dbReference>
<dbReference type="InterPro" id="IPR023016">
    <property type="entry name" value="Isoase_HisA-like_bact"/>
</dbReference>
<dbReference type="InterPro" id="IPR011060">
    <property type="entry name" value="RibuloseP-bd_barrel"/>
</dbReference>
<dbReference type="NCBIfam" id="TIGR00007">
    <property type="entry name" value="1-(5-phosphoribosyl)-5-[(5-phosphoribosylamino)methylideneamino]imidazole-4-carboxamide isomerase"/>
    <property type="match status" value="1"/>
</dbReference>
<dbReference type="NCBIfam" id="NF010112">
    <property type="entry name" value="PRK13585.1"/>
    <property type="match status" value="1"/>
</dbReference>
<dbReference type="PANTHER" id="PTHR43090">
    <property type="entry name" value="1-(5-PHOSPHORIBOSYL)-5-[(5-PHOSPHORIBOSYLAMINO)METHYLIDENEAMINO] IMIDAZOLE-4-CARBOXAMIDE ISOMERASE"/>
    <property type="match status" value="1"/>
</dbReference>
<dbReference type="PANTHER" id="PTHR43090:SF2">
    <property type="entry name" value="1-(5-PHOSPHORIBOSYL)-5-[(5-PHOSPHORIBOSYLAMINO)METHYLIDENEAMINO] IMIDAZOLE-4-CARBOXAMIDE ISOMERASE"/>
    <property type="match status" value="1"/>
</dbReference>
<dbReference type="Pfam" id="PF00977">
    <property type="entry name" value="His_biosynth"/>
    <property type="match status" value="1"/>
</dbReference>
<dbReference type="SUPFAM" id="SSF51366">
    <property type="entry name" value="Ribulose-phoshate binding barrel"/>
    <property type="match status" value="1"/>
</dbReference>
<protein>
    <recommendedName>
        <fullName evidence="1">1-(5-phosphoribosyl)-5-[(5-phosphoribosylamino)methylideneamino] imidazole-4-carboxamide isomerase</fullName>
        <ecNumber evidence="1">5.3.1.16</ecNumber>
    </recommendedName>
    <alternativeName>
        <fullName evidence="1">Phosphoribosylformimino-5-aminoimidazole carboxamide ribotide isomerase</fullName>
    </alternativeName>
</protein>
<proteinExistence type="inferred from homology"/>
<sequence>MDVIPAIDLLEGRCVRLYQGNYQQSEVYNENPVEVARQWADEGATRLHLVDLDGAKQGHPVNLDTIEAIVRAISIPVQVGGGLRDRQSIAQLIDLGVDRTIVGTVAVENPSLVQELCQAFPSKIAVGIDARNGKVATRGWLETSEVLATELAQQMAELGVSAIIYTDIHRDGTLQGPNREALRELANHIKIPVIASGGVSSLSDVLGLLALEPIGVTGVIIGKALYTGDVSLAEAVHAVGPGRWQDIPPDLGSSAFG</sequence>
<reference key="1">
    <citation type="journal article" date="2008" name="Proc. Natl. Acad. Sci. U.S.A.">
        <title>The genome of Cyanothece 51142, a unicellular diazotrophic cyanobacterium important in the marine nitrogen cycle.</title>
        <authorList>
            <person name="Welsh E.A."/>
            <person name="Liberton M."/>
            <person name="Stoeckel J."/>
            <person name="Loh T."/>
            <person name="Elvitigala T."/>
            <person name="Wang C."/>
            <person name="Wollam A."/>
            <person name="Fulton R.S."/>
            <person name="Clifton S.W."/>
            <person name="Jacobs J.M."/>
            <person name="Aurora R."/>
            <person name="Ghosh B.K."/>
            <person name="Sherman L.A."/>
            <person name="Smith R.D."/>
            <person name="Wilson R.K."/>
            <person name="Pakrasi H.B."/>
        </authorList>
    </citation>
    <scope>NUCLEOTIDE SEQUENCE [LARGE SCALE GENOMIC DNA]</scope>
    <source>
        <strain>ATCC 51142 / BH68</strain>
    </source>
</reference>